<comment type="function">
    <text>VSG forms a coat on the surface of the parasite. The trypanosome evades the immune response of the host by expressing a series of antigenically distinct VSGs from an estimated 1000 VSG genes.</text>
</comment>
<comment type="subcellular location">
    <subcellularLocation>
        <location>Cell membrane</location>
        <topology>Lipid-anchor</topology>
        <topology>GPI-anchor</topology>
    </subcellularLocation>
    <text evidence="1">A soluble form is released from ruptured cells by the action of a PI-PLC.</text>
</comment>
<proteinExistence type="evidence at transcript level"/>
<evidence type="ECO:0000250" key="1"/>
<evidence type="ECO:0000255" key="2"/>
<evidence type="ECO:0000256" key="3">
    <source>
        <dbReference type="SAM" id="MobiDB-lite"/>
    </source>
</evidence>
<protein>
    <recommendedName>
        <fullName>Variant surface glycoprotein ILTAT 1.23</fullName>
        <shortName>VSG</shortName>
    </recommendedName>
</protein>
<feature type="signal peptide">
    <location>
        <begin position="1"/>
        <end position="23"/>
    </location>
</feature>
<feature type="chain" id="PRO_0000036421" description="Variant surface glycoprotein ILTAT 1.23">
    <location>
        <begin position="24"/>
        <end position="509"/>
    </location>
</feature>
<feature type="propeptide" id="PRO_0000036422" description="Removed in mature form" evidence="2">
    <location>
        <begin position="510"/>
        <end position="532"/>
    </location>
</feature>
<feature type="region of interest" description="Disordered" evidence="3">
    <location>
        <begin position="79"/>
        <end position="107"/>
    </location>
</feature>
<feature type="region of interest" description="Disordered" evidence="3">
    <location>
        <begin position="408"/>
        <end position="504"/>
    </location>
</feature>
<feature type="compositionally biased region" description="Basic and acidic residues" evidence="3">
    <location>
        <begin position="427"/>
        <end position="445"/>
    </location>
</feature>
<feature type="compositionally biased region" description="Low complexity" evidence="3">
    <location>
        <begin position="450"/>
        <end position="470"/>
    </location>
</feature>
<feature type="compositionally biased region" description="Basic and acidic residues" evidence="3">
    <location>
        <begin position="472"/>
        <end position="484"/>
    </location>
</feature>
<feature type="compositionally biased region" description="Basic and acidic residues" evidence="3">
    <location>
        <begin position="494"/>
        <end position="504"/>
    </location>
</feature>
<feature type="lipid moiety-binding region" description="GPI-anchor amidated asparagine" evidence="2">
    <location>
        <position position="509"/>
    </location>
</feature>
<feature type="glycosylation site" description="N-linked (GlcNAc...) asparagine" evidence="2">
    <location>
        <position position="66"/>
    </location>
</feature>
<feature type="glycosylation site" description="N-linked (GlcNAc...) asparagine" evidence="2">
    <location>
        <position position="419"/>
    </location>
</feature>
<feature type="glycosylation site" description="N-linked (GlcNAc...) asparagine" evidence="2">
    <location>
        <position position="509"/>
    </location>
</feature>
<sequence length="532" mass="56779">MFKNINAAVLLLILSTRNDYANAAAGDNENLFLDLCNLLELGKRAVSKLAPTNLGELAYSEIQKLNMSLSDDAWKAKFAPKKGKQENSNNADGAPRSQEKTHARNHAWRQAATDLAGDEGDKPTLRLAGLEAVTQVEKLQYLSALQPLAERAAAILEQLKTLHSGSAGLTDTNIRQEIQTALYGTGATAPEKTTLQLLKGKGNVGSTRKDICGQDNTAAKADTVLAYLFCICAGHATDSGGAIKVCSQTQPANNKADADVSDAHTHAAALAGQCHGSDTTNDIKAAEIDSAILEFTSKLKAANQKPYFGKYSATGCTGSDAEGICVMFKTTAKGEGKAVKQIPWVLTLHNAAEMIRKQQAVNGKIDSLNQELQAIQTAAYALKPQLEMYKRLQQTTEKARPGKQLTEMQAGECNTHKSNSTCPKNNCKWEEKDGKDGKCVADDSKVTTQGNAPAGAGDGTAGTTTTPNCASHTDKTKCEEENKGKTTPVCGWRKGKEGESDQDKEMCRNGSFLAKKKFALSVVSAAFTALLF</sequence>
<reference key="1">
    <citation type="journal article" date="1991" name="J. Mol. Biol.">
        <title>Variant specific glycoprotein of Trypanosoma brucei consists of two domains each having an independently conserved pattern of cysteine residues.</title>
        <authorList>
            <person name="Carrington M."/>
            <person name="Miller N."/>
            <person name="Blum M.L."/>
            <person name="Roditi I."/>
            <person name="Wiley D.C."/>
            <person name="Turner M.J."/>
        </authorList>
    </citation>
    <scope>NUCLEOTIDE SEQUENCE [MRNA]</scope>
    <source>
        <strain>Isolate MIAG 206</strain>
    </source>
</reference>
<keyword id="KW-1003">Cell membrane</keyword>
<keyword id="KW-0325">Glycoprotein</keyword>
<keyword id="KW-0336">GPI-anchor</keyword>
<keyword id="KW-0449">Lipoprotein</keyword>
<keyword id="KW-0472">Membrane</keyword>
<keyword id="KW-0732">Signal</keyword>
<keyword id="KW-0821">Trypanosomiasis</keyword>
<name>VSI3_TRYBB</name>
<organism>
    <name type="scientific">Trypanosoma brucei brucei</name>
    <dbReference type="NCBI Taxonomy" id="5702"/>
    <lineage>
        <taxon>Eukaryota</taxon>
        <taxon>Discoba</taxon>
        <taxon>Euglenozoa</taxon>
        <taxon>Kinetoplastea</taxon>
        <taxon>Metakinetoplastina</taxon>
        <taxon>Trypanosomatida</taxon>
        <taxon>Trypanosomatidae</taxon>
        <taxon>Trypanosoma</taxon>
    </lineage>
</organism>
<accession>P26328</accession>
<dbReference type="EMBL" id="X56768">
    <property type="protein sequence ID" value="CAA40087.1"/>
    <property type="molecule type" value="mRNA"/>
</dbReference>
<dbReference type="PIR" id="S18448">
    <property type="entry name" value="S18448"/>
</dbReference>
<dbReference type="SMR" id="P26328"/>
<dbReference type="GO" id="GO:0005886">
    <property type="term" value="C:plasma membrane"/>
    <property type="evidence" value="ECO:0007669"/>
    <property type="project" value="UniProtKB-SubCell"/>
</dbReference>
<dbReference type="GO" id="GO:0098552">
    <property type="term" value="C:side of membrane"/>
    <property type="evidence" value="ECO:0007669"/>
    <property type="project" value="UniProtKB-KW"/>
</dbReference>
<dbReference type="InterPro" id="IPR025932">
    <property type="entry name" value="Trypano_VSG_B_N_dom"/>
</dbReference>
<dbReference type="InterPro" id="IPR019609">
    <property type="entry name" value="Variant_surf_glycoprt_trypan_C"/>
</dbReference>
<dbReference type="InterPro" id="IPR027446">
    <property type="entry name" value="VSG_C_dom_sf"/>
</dbReference>
<dbReference type="Pfam" id="PF10659">
    <property type="entry name" value="Trypan_glycop_C"/>
    <property type="match status" value="1"/>
</dbReference>
<dbReference type="Pfam" id="PF13206">
    <property type="entry name" value="VSG_B"/>
    <property type="match status" value="1"/>
</dbReference>
<dbReference type="SUPFAM" id="SSF118251">
    <property type="entry name" value="Variant surface glycoprotein MITAT 1.2, VSG 221, C-terminal domain"/>
    <property type="match status" value="1"/>
</dbReference>